<protein>
    <recommendedName>
        <fullName evidence="1">DNA mismatch repair protein MutS</fullName>
    </recommendedName>
</protein>
<gene>
    <name evidence="1" type="primary">mutS</name>
    <name type="ordered locus">BCAH820_3781</name>
</gene>
<evidence type="ECO:0000255" key="1">
    <source>
        <dbReference type="HAMAP-Rule" id="MF_00096"/>
    </source>
</evidence>
<name>MUTS_BACC0</name>
<feature type="chain" id="PRO_1000117277" description="DNA mismatch repair protein MutS">
    <location>
        <begin position="1"/>
        <end position="892"/>
    </location>
</feature>
<feature type="binding site" evidence="1">
    <location>
        <begin position="607"/>
        <end position="614"/>
    </location>
    <ligand>
        <name>ATP</name>
        <dbReference type="ChEBI" id="CHEBI:30616"/>
    </ligand>
</feature>
<comment type="function">
    <text evidence="1">This protein is involved in the repair of mismatches in DNA. It is possible that it carries out the mismatch recognition step. This protein has a weak ATPase activity.</text>
</comment>
<comment type="similarity">
    <text evidence="1">Belongs to the DNA mismatch repair MutS family.</text>
</comment>
<accession>B7JJ47</accession>
<dbReference type="EMBL" id="CP001283">
    <property type="protein sequence ID" value="ACK87909.1"/>
    <property type="molecule type" value="Genomic_DNA"/>
</dbReference>
<dbReference type="RefSeq" id="WP_000196008.1">
    <property type="nucleotide sequence ID" value="NC_011773.1"/>
</dbReference>
<dbReference type="SMR" id="B7JJ47"/>
<dbReference type="KEGG" id="bcu:BCAH820_3781"/>
<dbReference type="HOGENOM" id="CLU_002472_3_1_9"/>
<dbReference type="Proteomes" id="UP000001363">
    <property type="component" value="Chromosome"/>
</dbReference>
<dbReference type="GO" id="GO:0005829">
    <property type="term" value="C:cytosol"/>
    <property type="evidence" value="ECO:0007669"/>
    <property type="project" value="TreeGrafter"/>
</dbReference>
<dbReference type="GO" id="GO:0005524">
    <property type="term" value="F:ATP binding"/>
    <property type="evidence" value="ECO:0007669"/>
    <property type="project" value="UniProtKB-UniRule"/>
</dbReference>
<dbReference type="GO" id="GO:0140664">
    <property type="term" value="F:ATP-dependent DNA damage sensor activity"/>
    <property type="evidence" value="ECO:0007669"/>
    <property type="project" value="InterPro"/>
</dbReference>
<dbReference type="GO" id="GO:0003684">
    <property type="term" value="F:damaged DNA binding"/>
    <property type="evidence" value="ECO:0007669"/>
    <property type="project" value="UniProtKB-UniRule"/>
</dbReference>
<dbReference type="GO" id="GO:0030983">
    <property type="term" value="F:mismatched DNA binding"/>
    <property type="evidence" value="ECO:0007669"/>
    <property type="project" value="InterPro"/>
</dbReference>
<dbReference type="GO" id="GO:0006298">
    <property type="term" value="P:mismatch repair"/>
    <property type="evidence" value="ECO:0007669"/>
    <property type="project" value="UniProtKB-UniRule"/>
</dbReference>
<dbReference type="CDD" id="cd03284">
    <property type="entry name" value="ABC_MutS1"/>
    <property type="match status" value="1"/>
</dbReference>
<dbReference type="FunFam" id="1.10.1420.10:FF:000007">
    <property type="entry name" value="DNA mismatch repair protein MutS"/>
    <property type="match status" value="1"/>
</dbReference>
<dbReference type="FunFam" id="3.30.420.110:FF:000007">
    <property type="entry name" value="DNA mismatch repair protein MutS"/>
    <property type="match status" value="1"/>
</dbReference>
<dbReference type="FunFam" id="3.40.1170.10:FF:000001">
    <property type="entry name" value="DNA mismatch repair protein MutS"/>
    <property type="match status" value="1"/>
</dbReference>
<dbReference type="FunFam" id="3.40.50.300:FF:000896">
    <property type="entry name" value="DNA mismatch repair protein MutS"/>
    <property type="match status" value="1"/>
</dbReference>
<dbReference type="Gene3D" id="1.10.1420.10">
    <property type="match status" value="2"/>
</dbReference>
<dbReference type="Gene3D" id="3.40.1170.10">
    <property type="entry name" value="DNA repair protein MutS, domain I"/>
    <property type="match status" value="1"/>
</dbReference>
<dbReference type="Gene3D" id="3.30.420.110">
    <property type="entry name" value="MutS, connector domain"/>
    <property type="match status" value="1"/>
</dbReference>
<dbReference type="Gene3D" id="3.40.50.300">
    <property type="entry name" value="P-loop containing nucleotide triphosphate hydrolases"/>
    <property type="match status" value="1"/>
</dbReference>
<dbReference type="HAMAP" id="MF_00096">
    <property type="entry name" value="MutS"/>
    <property type="match status" value="1"/>
</dbReference>
<dbReference type="InterPro" id="IPR005748">
    <property type="entry name" value="DNA_mismatch_repair_MutS"/>
</dbReference>
<dbReference type="InterPro" id="IPR007695">
    <property type="entry name" value="DNA_mismatch_repair_MutS-lik_N"/>
</dbReference>
<dbReference type="InterPro" id="IPR017261">
    <property type="entry name" value="DNA_mismatch_repair_MutS/MSH"/>
</dbReference>
<dbReference type="InterPro" id="IPR000432">
    <property type="entry name" value="DNA_mismatch_repair_MutS_C"/>
</dbReference>
<dbReference type="InterPro" id="IPR007861">
    <property type="entry name" value="DNA_mismatch_repair_MutS_clamp"/>
</dbReference>
<dbReference type="InterPro" id="IPR007696">
    <property type="entry name" value="DNA_mismatch_repair_MutS_core"/>
</dbReference>
<dbReference type="InterPro" id="IPR016151">
    <property type="entry name" value="DNA_mismatch_repair_MutS_N"/>
</dbReference>
<dbReference type="InterPro" id="IPR036187">
    <property type="entry name" value="DNA_mismatch_repair_MutS_sf"/>
</dbReference>
<dbReference type="InterPro" id="IPR007860">
    <property type="entry name" value="DNA_mmatch_repair_MutS_con_dom"/>
</dbReference>
<dbReference type="InterPro" id="IPR045076">
    <property type="entry name" value="MutS"/>
</dbReference>
<dbReference type="InterPro" id="IPR036678">
    <property type="entry name" value="MutS_con_dom_sf"/>
</dbReference>
<dbReference type="InterPro" id="IPR027417">
    <property type="entry name" value="P-loop_NTPase"/>
</dbReference>
<dbReference type="NCBIfam" id="TIGR01070">
    <property type="entry name" value="mutS1"/>
    <property type="match status" value="1"/>
</dbReference>
<dbReference type="NCBIfam" id="NF003810">
    <property type="entry name" value="PRK05399.1"/>
    <property type="match status" value="1"/>
</dbReference>
<dbReference type="PANTHER" id="PTHR11361:SF34">
    <property type="entry name" value="DNA MISMATCH REPAIR PROTEIN MSH1, MITOCHONDRIAL"/>
    <property type="match status" value="1"/>
</dbReference>
<dbReference type="PANTHER" id="PTHR11361">
    <property type="entry name" value="DNA MISMATCH REPAIR PROTEIN MUTS FAMILY MEMBER"/>
    <property type="match status" value="1"/>
</dbReference>
<dbReference type="Pfam" id="PF01624">
    <property type="entry name" value="MutS_I"/>
    <property type="match status" value="1"/>
</dbReference>
<dbReference type="Pfam" id="PF05188">
    <property type="entry name" value="MutS_II"/>
    <property type="match status" value="1"/>
</dbReference>
<dbReference type="Pfam" id="PF05192">
    <property type="entry name" value="MutS_III"/>
    <property type="match status" value="1"/>
</dbReference>
<dbReference type="Pfam" id="PF05190">
    <property type="entry name" value="MutS_IV"/>
    <property type="match status" value="1"/>
</dbReference>
<dbReference type="Pfam" id="PF00488">
    <property type="entry name" value="MutS_V"/>
    <property type="match status" value="1"/>
</dbReference>
<dbReference type="PIRSF" id="PIRSF037677">
    <property type="entry name" value="DNA_mis_repair_Msh6"/>
    <property type="match status" value="1"/>
</dbReference>
<dbReference type="SMART" id="SM00534">
    <property type="entry name" value="MUTSac"/>
    <property type="match status" value="1"/>
</dbReference>
<dbReference type="SMART" id="SM00533">
    <property type="entry name" value="MUTSd"/>
    <property type="match status" value="1"/>
</dbReference>
<dbReference type="SUPFAM" id="SSF55271">
    <property type="entry name" value="DNA repair protein MutS, domain I"/>
    <property type="match status" value="1"/>
</dbReference>
<dbReference type="SUPFAM" id="SSF53150">
    <property type="entry name" value="DNA repair protein MutS, domain II"/>
    <property type="match status" value="1"/>
</dbReference>
<dbReference type="SUPFAM" id="SSF48334">
    <property type="entry name" value="DNA repair protein MutS, domain III"/>
    <property type="match status" value="1"/>
</dbReference>
<dbReference type="SUPFAM" id="SSF52540">
    <property type="entry name" value="P-loop containing nucleoside triphosphate hydrolases"/>
    <property type="match status" value="1"/>
</dbReference>
<dbReference type="PROSITE" id="PS00486">
    <property type="entry name" value="DNA_MISMATCH_REPAIR_2"/>
    <property type="match status" value="1"/>
</dbReference>
<reference key="1">
    <citation type="submission" date="2008-10" db="EMBL/GenBank/DDBJ databases">
        <title>Genome sequence of Bacillus cereus AH820.</title>
        <authorList>
            <person name="Dodson R.J."/>
            <person name="Durkin A.S."/>
            <person name="Rosovitz M.J."/>
            <person name="Rasko D.A."/>
            <person name="Hoffmaster A."/>
            <person name="Ravel J."/>
            <person name="Sutton G."/>
        </authorList>
    </citation>
    <scope>NUCLEOTIDE SEQUENCE [LARGE SCALE GENOMIC DNA]</scope>
    <source>
        <strain>AH820</strain>
    </source>
</reference>
<keyword id="KW-0067">ATP-binding</keyword>
<keyword id="KW-0227">DNA damage</keyword>
<keyword id="KW-0234">DNA repair</keyword>
<keyword id="KW-0238">DNA-binding</keyword>
<keyword id="KW-0547">Nucleotide-binding</keyword>
<organism>
    <name type="scientific">Bacillus cereus (strain AH820)</name>
    <dbReference type="NCBI Taxonomy" id="405535"/>
    <lineage>
        <taxon>Bacteria</taxon>
        <taxon>Bacillati</taxon>
        <taxon>Bacillota</taxon>
        <taxon>Bacilli</taxon>
        <taxon>Bacillales</taxon>
        <taxon>Bacillaceae</taxon>
        <taxon>Bacillus</taxon>
        <taxon>Bacillus cereus group</taxon>
    </lineage>
</organism>
<proteinExistence type="inferred from homology"/>
<sequence>MTQYTPMIQQYLKVKADYQDAFLFFRLGDFYEMFFEDAVKAAHELEITLTSRDGGSSERIPMCGVPYHAAKNYIEQLVEKGYKVAVCEQVEDPKTAKGVVRREVVQLITPGTMMEGRTIDEKENNFLAALTHFEDGSYALACNDLTTGQNTVTLLTGSVEDILLEVYATGSKEIVVDSSFSKDELNKLTETLKMTISYEDATAIPEGLEHLVKNVSQAKLIKAVGRLFNYVIRTQKRSLDHLQPVEIYYTNQFMKIDVHSKRNLELTETLRTKEKTGSLLWLLDKTKTAMGGRMLKQWMERPLIQKERIEERLEMVETFVNDYFLREDLKEKLKEVYDLERLAGKVAFGNVNARDLLQLRRSLLQVPAILEAISLLDNAYAARLIQGADPCESLTELLGRSIQENPPLSIKDGDIIKDGYNDKLDQYRYVSKNGKTWIAELEKRERDITGIKSLKIGYNRIFGYYIEVTKANLGALPEGRYERKQTLANAERFITDELKEKETLILEAEEKIVQLEYDLFTALREEVKVFIPKLQHLAKVISELDVLQSFATVSEEEQFVKPVLTTKREIFIKDGRHPVVEKVLNGKLYVPNDCIMPENMDVFLITGPNMSGKSTYMRQLALVTVMSQIGCFVPATEAVLPVFDQIFTRIGAADDLISGQSTFMVEMLEAKNAIANASERSLILFDEIGRGTSTYDGMALAQAIIEHIHDQIGAKTLFSTHYHELTVLEDSLDQLKNVHVSAIEENGKVVFLHKIQDGAADKSYGIHVAQLAELPDSLIARAKEVLAQLEGQEEIVIPKRVEVKAQEQEVIPEPIVVKEEPIEIEETKVDNEEESQLSFFGAEQSSKKQAKPALDAKETAVLTQIKKIDLLDMTPLEAMNELYRLQKKLKKG</sequence>